<keyword id="KW-0496">Mitochondrion</keyword>
<keyword id="KW-1185">Reference proteome</keyword>
<keyword id="KW-0687">Ribonucleoprotein</keyword>
<keyword id="KW-0689">Ribosomal protein</keyword>
<keyword id="KW-0809">Transit peptide</keyword>
<proteinExistence type="evidence at transcript level"/>
<accession>Q9VHN6</accession>
<protein>
    <recommendedName>
        <fullName evidence="4">Large ribosomal subunit protein bL19m</fullName>
    </recommendedName>
    <alternativeName>
        <fullName>39S ribosomal protein L19, mitochondrial</fullName>
        <shortName>L19mt</shortName>
        <shortName>MRP-L19</shortName>
    </alternativeName>
</protein>
<gene>
    <name type="primary">mRpL19</name>
    <name type="ORF">CG8039</name>
</gene>
<name>RM19_DROME</name>
<sequence>MNLSTRVMLNRLTQQCVYKRIVTFSTKTAEHVIENQEEQKKEAPPTTPTSPVNRKTIIPANYRFVYPEFLPDPKVEWRNLVREKLERLDMLDRRKQIDLPEFYVGSVLAVTSSDPHAAGKTSRFVGICINRDRCGLRARFILRNVIDHQGMEVVYELYDPTILKIEVLRLEKRLDDSLFYLRDALPEYSTFDENMEAEPLEEGAPVPVNDIKVVLRPRPWLERWERQNLRGVANIDEYLKDKHRLSAAKVQKPWEKYDMMKDYRSSIPEEEQTEIFAEVHTELHALELQRKRNKRKRTFIKPKQLA</sequence>
<evidence type="ECO:0000250" key="1">
    <source>
        <dbReference type="UniProtKB" id="P49406"/>
    </source>
</evidence>
<evidence type="ECO:0000255" key="2"/>
<evidence type="ECO:0000256" key="3">
    <source>
        <dbReference type="SAM" id="MobiDB-lite"/>
    </source>
</evidence>
<evidence type="ECO:0000305" key="4"/>
<comment type="subunit">
    <text evidence="1">Component of the mitochondrial ribosome large subunit (39S) which comprises a 16S rRNA and about 50 distinct proteins.</text>
</comment>
<comment type="subcellular location">
    <subcellularLocation>
        <location evidence="1">Mitochondrion</location>
    </subcellularLocation>
</comment>
<comment type="similarity">
    <text evidence="4">Belongs to the bacterial ribosomal protein bL19 family.</text>
</comment>
<dbReference type="EMBL" id="AE014297">
    <property type="protein sequence ID" value="AAF54266.1"/>
    <property type="molecule type" value="Genomic_DNA"/>
</dbReference>
<dbReference type="EMBL" id="AY061413">
    <property type="protein sequence ID" value="AAL28961.1"/>
    <property type="molecule type" value="mRNA"/>
</dbReference>
<dbReference type="RefSeq" id="NP_524284.1">
    <property type="nucleotide sequence ID" value="NM_079560.5"/>
</dbReference>
<dbReference type="SMR" id="Q9VHN6"/>
<dbReference type="BioGRID" id="66203">
    <property type="interactions" value="1"/>
</dbReference>
<dbReference type="DIP" id="DIP-23691N"/>
<dbReference type="FunCoup" id="Q9VHN6">
    <property type="interactions" value="892"/>
</dbReference>
<dbReference type="IntAct" id="Q9VHN6">
    <property type="interactions" value="33"/>
</dbReference>
<dbReference type="STRING" id="7227.FBpp0081384"/>
<dbReference type="PaxDb" id="7227-FBpp0081384"/>
<dbReference type="DNASU" id="41028"/>
<dbReference type="EnsemblMetazoa" id="FBtr0081901">
    <property type="protein sequence ID" value="FBpp0081384"/>
    <property type="gene ID" value="FBgn0037608"/>
</dbReference>
<dbReference type="GeneID" id="41028"/>
<dbReference type="KEGG" id="dme:Dmel_CG8039"/>
<dbReference type="AGR" id="FB:FBgn0037608"/>
<dbReference type="CTD" id="9801"/>
<dbReference type="FlyBase" id="FBgn0037608">
    <property type="gene designation" value="mRpL19"/>
</dbReference>
<dbReference type="VEuPathDB" id="VectorBase:FBgn0037608"/>
<dbReference type="eggNOG" id="KOG1698">
    <property type="taxonomic scope" value="Eukaryota"/>
</dbReference>
<dbReference type="GeneTree" id="ENSGT00390000009415"/>
<dbReference type="HOGENOM" id="CLU_076988_0_0_1"/>
<dbReference type="InParanoid" id="Q9VHN6"/>
<dbReference type="OMA" id="IHEIQVV"/>
<dbReference type="OrthoDB" id="432645at2759"/>
<dbReference type="PhylomeDB" id="Q9VHN6"/>
<dbReference type="Reactome" id="R-DME-5389840">
    <property type="pathway name" value="Mitochondrial translation elongation"/>
</dbReference>
<dbReference type="Reactome" id="R-DME-5419276">
    <property type="pathway name" value="Mitochondrial translation termination"/>
</dbReference>
<dbReference type="BioGRID-ORCS" id="41028">
    <property type="hits" value="0 hits in 1 CRISPR screen"/>
</dbReference>
<dbReference type="GenomeRNAi" id="41028"/>
<dbReference type="PRO" id="PR:Q9VHN6"/>
<dbReference type="Proteomes" id="UP000000803">
    <property type="component" value="Chromosome 3R"/>
</dbReference>
<dbReference type="Bgee" id="FBgn0037608">
    <property type="expression patterns" value="Expressed in eye disc (Drosophila) and 127 other cell types or tissues"/>
</dbReference>
<dbReference type="GO" id="GO:0005762">
    <property type="term" value="C:mitochondrial large ribosomal subunit"/>
    <property type="evidence" value="ECO:0000250"/>
    <property type="project" value="UniProtKB"/>
</dbReference>
<dbReference type="GO" id="GO:0003735">
    <property type="term" value="F:structural constituent of ribosome"/>
    <property type="evidence" value="ECO:0000250"/>
    <property type="project" value="FlyBase"/>
</dbReference>
<dbReference type="GO" id="GO:0032543">
    <property type="term" value="P:mitochondrial translation"/>
    <property type="evidence" value="ECO:0000304"/>
    <property type="project" value="FlyBase"/>
</dbReference>
<dbReference type="FunFam" id="2.30.30.790:FF:000002">
    <property type="entry name" value="39S ribosomal protein L19, mitochondrial"/>
    <property type="match status" value="1"/>
</dbReference>
<dbReference type="Gene3D" id="2.30.30.790">
    <property type="match status" value="1"/>
</dbReference>
<dbReference type="InterPro" id="IPR001857">
    <property type="entry name" value="Ribosomal_bL19"/>
</dbReference>
<dbReference type="InterPro" id="IPR038657">
    <property type="entry name" value="Ribosomal_bL19_sf"/>
</dbReference>
<dbReference type="InterPro" id="IPR008991">
    <property type="entry name" value="Translation_prot_SH3-like_sf"/>
</dbReference>
<dbReference type="PANTHER" id="PTHR15680:SF9">
    <property type="entry name" value="LARGE RIBOSOMAL SUBUNIT PROTEIN BL19M"/>
    <property type="match status" value="1"/>
</dbReference>
<dbReference type="PANTHER" id="PTHR15680">
    <property type="entry name" value="RIBOSOMAL PROTEIN L19"/>
    <property type="match status" value="1"/>
</dbReference>
<dbReference type="Pfam" id="PF01245">
    <property type="entry name" value="Ribosomal_L19"/>
    <property type="match status" value="1"/>
</dbReference>
<dbReference type="SUPFAM" id="SSF50104">
    <property type="entry name" value="Translation proteins SH3-like domain"/>
    <property type="match status" value="1"/>
</dbReference>
<reference key="1">
    <citation type="journal article" date="2000" name="Science">
        <title>The genome sequence of Drosophila melanogaster.</title>
        <authorList>
            <person name="Adams M.D."/>
            <person name="Celniker S.E."/>
            <person name="Holt R.A."/>
            <person name="Evans C.A."/>
            <person name="Gocayne J.D."/>
            <person name="Amanatides P.G."/>
            <person name="Scherer S.E."/>
            <person name="Li P.W."/>
            <person name="Hoskins R.A."/>
            <person name="Galle R.F."/>
            <person name="George R.A."/>
            <person name="Lewis S.E."/>
            <person name="Richards S."/>
            <person name="Ashburner M."/>
            <person name="Henderson S.N."/>
            <person name="Sutton G.G."/>
            <person name="Wortman J.R."/>
            <person name="Yandell M.D."/>
            <person name="Zhang Q."/>
            <person name="Chen L.X."/>
            <person name="Brandon R.C."/>
            <person name="Rogers Y.-H.C."/>
            <person name="Blazej R.G."/>
            <person name="Champe M."/>
            <person name="Pfeiffer B.D."/>
            <person name="Wan K.H."/>
            <person name="Doyle C."/>
            <person name="Baxter E.G."/>
            <person name="Helt G."/>
            <person name="Nelson C.R."/>
            <person name="Miklos G.L.G."/>
            <person name="Abril J.F."/>
            <person name="Agbayani A."/>
            <person name="An H.-J."/>
            <person name="Andrews-Pfannkoch C."/>
            <person name="Baldwin D."/>
            <person name="Ballew R.M."/>
            <person name="Basu A."/>
            <person name="Baxendale J."/>
            <person name="Bayraktaroglu L."/>
            <person name="Beasley E.M."/>
            <person name="Beeson K.Y."/>
            <person name="Benos P.V."/>
            <person name="Berman B.P."/>
            <person name="Bhandari D."/>
            <person name="Bolshakov S."/>
            <person name="Borkova D."/>
            <person name="Botchan M.R."/>
            <person name="Bouck J."/>
            <person name="Brokstein P."/>
            <person name="Brottier P."/>
            <person name="Burtis K.C."/>
            <person name="Busam D.A."/>
            <person name="Butler H."/>
            <person name="Cadieu E."/>
            <person name="Center A."/>
            <person name="Chandra I."/>
            <person name="Cherry J.M."/>
            <person name="Cawley S."/>
            <person name="Dahlke C."/>
            <person name="Davenport L.B."/>
            <person name="Davies P."/>
            <person name="de Pablos B."/>
            <person name="Delcher A."/>
            <person name="Deng Z."/>
            <person name="Mays A.D."/>
            <person name="Dew I."/>
            <person name="Dietz S.M."/>
            <person name="Dodson K."/>
            <person name="Doup L.E."/>
            <person name="Downes M."/>
            <person name="Dugan-Rocha S."/>
            <person name="Dunkov B.C."/>
            <person name="Dunn P."/>
            <person name="Durbin K.J."/>
            <person name="Evangelista C.C."/>
            <person name="Ferraz C."/>
            <person name="Ferriera S."/>
            <person name="Fleischmann W."/>
            <person name="Fosler C."/>
            <person name="Gabrielian A.E."/>
            <person name="Garg N.S."/>
            <person name="Gelbart W.M."/>
            <person name="Glasser K."/>
            <person name="Glodek A."/>
            <person name="Gong F."/>
            <person name="Gorrell J.H."/>
            <person name="Gu Z."/>
            <person name="Guan P."/>
            <person name="Harris M."/>
            <person name="Harris N.L."/>
            <person name="Harvey D.A."/>
            <person name="Heiman T.J."/>
            <person name="Hernandez J.R."/>
            <person name="Houck J."/>
            <person name="Hostin D."/>
            <person name="Houston K.A."/>
            <person name="Howland T.J."/>
            <person name="Wei M.-H."/>
            <person name="Ibegwam C."/>
            <person name="Jalali M."/>
            <person name="Kalush F."/>
            <person name="Karpen G.H."/>
            <person name="Ke Z."/>
            <person name="Kennison J.A."/>
            <person name="Ketchum K.A."/>
            <person name="Kimmel B.E."/>
            <person name="Kodira C.D."/>
            <person name="Kraft C.L."/>
            <person name="Kravitz S."/>
            <person name="Kulp D."/>
            <person name="Lai Z."/>
            <person name="Lasko P."/>
            <person name="Lei Y."/>
            <person name="Levitsky A.A."/>
            <person name="Li J.H."/>
            <person name="Li Z."/>
            <person name="Liang Y."/>
            <person name="Lin X."/>
            <person name="Liu X."/>
            <person name="Mattei B."/>
            <person name="McIntosh T.C."/>
            <person name="McLeod M.P."/>
            <person name="McPherson D."/>
            <person name="Merkulov G."/>
            <person name="Milshina N.V."/>
            <person name="Mobarry C."/>
            <person name="Morris J."/>
            <person name="Moshrefi A."/>
            <person name="Mount S.M."/>
            <person name="Moy M."/>
            <person name="Murphy B."/>
            <person name="Murphy L."/>
            <person name="Muzny D.M."/>
            <person name="Nelson D.L."/>
            <person name="Nelson D.R."/>
            <person name="Nelson K.A."/>
            <person name="Nixon K."/>
            <person name="Nusskern D.R."/>
            <person name="Pacleb J.M."/>
            <person name="Palazzolo M."/>
            <person name="Pittman G.S."/>
            <person name="Pan S."/>
            <person name="Pollard J."/>
            <person name="Puri V."/>
            <person name="Reese M.G."/>
            <person name="Reinert K."/>
            <person name="Remington K."/>
            <person name="Saunders R.D.C."/>
            <person name="Scheeler F."/>
            <person name="Shen H."/>
            <person name="Shue B.C."/>
            <person name="Siden-Kiamos I."/>
            <person name="Simpson M."/>
            <person name="Skupski M.P."/>
            <person name="Smith T.J."/>
            <person name="Spier E."/>
            <person name="Spradling A.C."/>
            <person name="Stapleton M."/>
            <person name="Strong R."/>
            <person name="Sun E."/>
            <person name="Svirskas R."/>
            <person name="Tector C."/>
            <person name="Turner R."/>
            <person name="Venter E."/>
            <person name="Wang A.H."/>
            <person name="Wang X."/>
            <person name="Wang Z.-Y."/>
            <person name="Wassarman D.A."/>
            <person name="Weinstock G.M."/>
            <person name="Weissenbach J."/>
            <person name="Williams S.M."/>
            <person name="Woodage T."/>
            <person name="Worley K.C."/>
            <person name="Wu D."/>
            <person name="Yang S."/>
            <person name="Yao Q.A."/>
            <person name="Ye J."/>
            <person name="Yeh R.-F."/>
            <person name="Zaveri J.S."/>
            <person name="Zhan M."/>
            <person name="Zhang G."/>
            <person name="Zhao Q."/>
            <person name="Zheng L."/>
            <person name="Zheng X.H."/>
            <person name="Zhong F.N."/>
            <person name="Zhong W."/>
            <person name="Zhou X."/>
            <person name="Zhu S.C."/>
            <person name="Zhu X."/>
            <person name="Smith H.O."/>
            <person name="Gibbs R.A."/>
            <person name="Myers E.W."/>
            <person name="Rubin G.M."/>
            <person name="Venter J.C."/>
        </authorList>
    </citation>
    <scope>NUCLEOTIDE SEQUENCE [LARGE SCALE GENOMIC DNA]</scope>
    <source>
        <strain>Berkeley</strain>
    </source>
</reference>
<reference key="2">
    <citation type="journal article" date="2002" name="Genome Biol.">
        <title>Annotation of the Drosophila melanogaster euchromatic genome: a systematic review.</title>
        <authorList>
            <person name="Misra S."/>
            <person name="Crosby M.A."/>
            <person name="Mungall C.J."/>
            <person name="Matthews B.B."/>
            <person name="Campbell K.S."/>
            <person name="Hradecky P."/>
            <person name="Huang Y."/>
            <person name="Kaminker J.S."/>
            <person name="Millburn G.H."/>
            <person name="Prochnik S.E."/>
            <person name="Smith C.D."/>
            <person name="Tupy J.L."/>
            <person name="Whitfield E.J."/>
            <person name="Bayraktaroglu L."/>
            <person name="Berman B.P."/>
            <person name="Bettencourt B.R."/>
            <person name="Celniker S.E."/>
            <person name="de Grey A.D.N.J."/>
            <person name="Drysdale R.A."/>
            <person name="Harris N.L."/>
            <person name="Richter J."/>
            <person name="Russo S."/>
            <person name="Schroeder A.J."/>
            <person name="Shu S.Q."/>
            <person name="Stapleton M."/>
            <person name="Yamada C."/>
            <person name="Ashburner M."/>
            <person name="Gelbart W.M."/>
            <person name="Rubin G.M."/>
            <person name="Lewis S.E."/>
        </authorList>
    </citation>
    <scope>GENOME REANNOTATION</scope>
    <source>
        <strain>Berkeley</strain>
    </source>
</reference>
<reference key="3">
    <citation type="journal article" date="2002" name="Genome Biol.">
        <title>A Drosophila full-length cDNA resource.</title>
        <authorList>
            <person name="Stapleton M."/>
            <person name="Carlson J.W."/>
            <person name="Brokstein P."/>
            <person name="Yu C."/>
            <person name="Champe M."/>
            <person name="George R.A."/>
            <person name="Guarin H."/>
            <person name="Kronmiller B."/>
            <person name="Pacleb J.M."/>
            <person name="Park S."/>
            <person name="Wan K.H."/>
            <person name="Rubin G.M."/>
            <person name="Celniker S.E."/>
        </authorList>
    </citation>
    <scope>NUCLEOTIDE SEQUENCE [LARGE SCALE MRNA]</scope>
    <source>
        <strain>Berkeley</strain>
    </source>
</reference>
<feature type="transit peptide" description="Mitochondrion" evidence="2">
    <location>
        <begin position="1"/>
        <end status="unknown"/>
    </location>
</feature>
<feature type="chain" id="PRO_0000030475" description="Large ribosomal subunit protein bL19m">
    <location>
        <begin status="unknown"/>
        <end position="306"/>
    </location>
</feature>
<feature type="region of interest" description="Disordered" evidence="3">
    <location>
        <begin position="34"/>
        <end position="53"/>
    </location>
</feature>
<feature type="compositionally biased region" description="Basic and acidic residues" evidence="3">
    <location>
        <begin position="34"/>
        <end position="43"/>
    </location>
</feature>
<organism>
    <name type="scientific">Drosophila melanogaster</name>
    <name type="common">Fruit fly</name>
    <dbReference type="NCBI Taxonomy" id="7227"/>
    <lineage>
        <taxon>Eukaryota</taxon>
        <taxon>Metazoa</taxon>
        <taxon>Ecdysozoa</taxon>
        <taxon>Arthropoda</taxon>
        <taxon>Hexapoda</taxon>
        <taxon>Insecta</taxon>
        <taxon>Pterygota</taxon>
        <taxon>Neoptera</taxon>
        <taxon>Endopterygota</taxon>
        <taxon>Diptera</taxon>
        <taxon>Brachycera</taxon>
        <taxon>Muscomorpha</taxon>
        <taxon>Ephydroidea</taxon>
        <taxon>Drosophilidae</taxon>
        <taxon>Drosophila</taxon>
        <taxon>Sophophora</taxon>
    </lineage>
</organism>